<name>CLPS_RUEST</name>
<keyword id="KW-1185">Reference proteome</keyword>
<protein>
    <recommendedName>
        <fullName evidence="1">ATP-dependent Clp protease adapter protein ClpS</fullName>
    </recommendedName>
</protein>
<evidence type="ECO:0000255" key="1">
    <source>
        <dbReference type="HAMAP-Rule" id="MF_00302"/>
    </source>
</evidence>
<evidence type="ECO:0000256" key="2">
    <source>
        <dbReference type="SAM" id="MobiDB-lite"/>
    </source>
</evidence>
<dbReference type="EMBL" id="CP000377">
    <property type="protein sequence ID" value="ABF65266.1"/>
    <property type="molecule type" value="Genomic_DNA"/>
</dbReference>
<dbReference type="RefSeq" id="WP_011539851.1">
    <property type="nucleotide sequence ID" value="NC_008044.1"/>
</dbReference>
<dbReference type="SMR" id="Q1GDK0"/>
<dbReference type="STRING" id="292414.TM1040_2534"/>
<dbReference type="KEGG" id="sit:TM1040_2534"/>
<dbReference type="eggNOG" id="COG2127">
    <property type="taxonomic scope" value="Bacteria"/>
</dbReference>
<dbReference type="HOGENOM" id="CLU_134358_2_1_5"/>
<dbReference type="Proteomes" id="UP000000636">
    <property type="component" value="Chromosome"/>
</dbReference>
<dbReference type="GO" id="GO:0030163">
    <property type="term" value="P:protein catabolic process"/>
    <property type="evidence" value="ECO:0007669"/>
    <property type="project" value="InterPro"/>
</dbReference>
<dbReference type="GO" id="GO:0006508">
    <property type="term" value="P:proteolysis"/>
    <property type="evidence" value="ECO:0007669"/>
    <property type="project" value="UniProtKB-UniRule"/>
</dbReference>
<dbReference type="FunFam" id="3.30.1390.10:FF:000002">
    <property type="entry name" value="ATP-dependent Clp protease adapter protein ClpS"/>
    <property type="match status" value="1"/>
</dbReference>
<dbReference type="Gene3D" id="3.30.1390.10">
    <property type="match status" value="1"/>
</dbReference>
<dbReference type="HAMAP" id="MF_00302">
    <property type="entry name" value="ClpS"/>
    <property type="match status" value="1"/>
</dbReference>
<dbReference type="InterPro" id="IPR022935">
    <property type="entry name" value="ClpS"/>
</dbReference>
<dbReference type="InterPro" id="IPR003769">
    <property type="entry name" value="ClpS_core"/>
</dbReference>
<dbReference type="InterPro" id="IPR014719">
    <property type="entry name" value="Ribosomal_bL12_C/ClpS-like"/>
</dbReference>
<dbReference type="NCBIfam" id="NF000669">
    <property type="entry name" value="PRK00033.1-2"/>
    <property type="match status" value="1"/>
</dbReference>
<dbReference type="NCBIfam" id="NF000672">
    <property type="entry name" value="PRK00033.1-5"/>
    <property type="match status" value="1"/>
</dbReference>
<dbReference type="PANTHER" id="PTHR33473:SF19">
    <property type="entry name" value="ATP-DEPENDENT CLP PROTEASE ADAPTER PROTEIN CLPS"/>
    <property type="match status" value="1"/>
</dbReference>
<dbReference type="PANTHER" id="PTHR33473">
    <property type="entry name" value="ATP-DEPENDENT CLP PROTEASE ADAPTER PROTEIN CLPS1, CHLOROPLASTIC"/>
    <property type="match status" value="1"/>
</dbReference>
<dbReference type="Pfam" id="PF02617">
    <property type="entry name" value="ClpS"/>
    <property type="match status" value="1"/>
</dbReference>
<dbReference type="SUPFAM" id="SSF54736">
    <property type="entry name" value="ClpS-like"/>
    <property type="match status" value="1"/>
</dbReference>
<comment type="function">
    <text evidence="1">Involved in the modulation of the specificity of the ClpAP-mediated ATP-dependent protein degradation.</text>
</comment>
<comment type="subunit">
    <text evidence="1">Binds to the N-terminal domain of the chaperone ClpA.</text>
</comment>
<comment type="similarity">
    <text evidence="1">Belongs to the ClpS family.</text>
</comment>
<feature type="chain" id="PRO_0000300729" description="ATP-dependent Clp protease adapter protein ClpS">
    <location>
        <begin position="1"/>
        <end position="113"/>
    </location>
</feature>
<feature type="region of interest" description="Disordered" evidence="2">
    <location>
        <begin position="1"/>
        <end position="26"/>
    </location>
</feature>
<accession>Q1GDK0</accession>
<gene>
    <name evidence="1" type="primary">clpS</name>
    <name type="ordered locus">TM1040_2534</name>
</gene>
<proteinExistence type="inferred from homology"/>
<organism>
    <name type="scientific">Ruegeria sp. (strain TM1040)</name>
    <name type="common">Silicibacter sp.</name>
    <dbReference type="NCBI Taxonomy" id="292414"/>
    <lineage>
        <taxon>Bacteria</taxon>
        <taxon>Pseudomonadati</taxon>
        <taxon>Pseudomonadota</taxon>
        <taxon>Alphaproteobacteria</taxon>
        <taxon>Rhodobacterales</taxon>
        <taxon>Roseobacteraceae</taxon>
        <taxon>Ruegeria</taxon>
    </lineage>
</organism>
<reference key="1">
    <citation type="submission" date="2006-05" db="EMBL/GenBank/DDBJ databases">
        <title>Complete sequence of chromosome of Silicibacter sp. TM1040.</title>
        <authorList>
            <consortium name="US DOE Joint Genome Institute"/>
            <person name="Copeland A."/>
            <person name="Lucas S."/>
            <person name="Lapidus A."/>
            <person name="Barry K."/>
            <person name="Detter J.C."/>
            <person name="Glavina del Rio T."/>
            <person name="Hammon N."/>
            <person name="Israni S."/>
            <person name="Dalin E."/>
            <person name="Tice H."/>
            <person name="Pitluck S."/>
            <person name="Brettin T."/>
            <person name="Bruce D."/>
            <person name="Han C."/>
            <person name="Tapia R."/>
            <person name="Goodwin L."/>
            <person name="Thompson L.S."/>
            <person name="Gilna P."/>
            <person name="Schmutz J."/>
            <person name="Larimer F."/>
            <person name="Land M."/>
            <person name="Hauser L."/>
            <person name="Kyrpides N."/>
            <person name="Kim E."/>
            <person name="Belas R."/>
            <person name="Moran M.A."/>
            <person name="Buchan A."/>
            <person name="Gonzalez J.M."/>
            <person name="Schell M.A."/>
            <person name="Sun F."/>
            <person name="Richardson P."/>
        </authorList>
    </citation>
    <scope>NUCLEOTIDE SEQUENCE [LARGE SCALE GENOMIC DNA]</scope>
    <source>
        <strain>TM1040</strain>
    </source>
</reference>
<sequence>MLMQPLMMSDNPDDESDLGLLTKTRPRTQRPPRYKVLLLNDDYTPMEFVVIVLERFFGLNHAQAFEIMLTVHKKGLAVVGVFSHEVAETKVAQVMDYARRHQHPLQCTMEKDD</sequence>